<comment type="function">
    <text evidence="2">Inhibits protease gelatinolytic complex activity against type 1 collagen.</text>
</comment>
<comment type="subunit">
    <text evidence="2">Homotetramer; consists of two dimer pairs that are disulfide-linked (PubMed:30899053). Part of a complex composed of complement component C3, CLCA1/CLCA3, A2ML1/OH and ALB/serum albumin (PubMed:30899053).</text>
</comment>
<comment type="subcellular location">
    <subcellularLocation>
        <location evidence="2">Secreted</location>
    </subcellularLocation>
    <text evidence="2">Secreted into uterine luminal fluid.</text>
</comment>
<comment type="similarity">
    <text evidence="4">Belongs to the protease inhibitor I39 (alpha-2-macroglobulin) family.</text>
</comment>
<comment type="caution">
    <text evidence="4">Does not share orthology with human A2ML1.</text>
</comment>
<keyword id="KW-0082">Bait region</keyword>
<keyword id="KW-1015">Disulfide bond</keyword>
<keyword id="KW-0325">Glycoprotein</keyword>
<keyword id="KW-0646">Protease inhibitor</keyword>
<keyword id="KW-1185">Reference proteome</keyword>
<keyword id="KW-0964">Secreted</keyword>
<keyword id="KW-0722">Serine protease inhibitor</keyword>
<keyword id="KW-0732">Signal</keyword>
<accession>Q3UU35</accession>
<accession>E9QMV5</accession>
<feature type="signal peptide" evidence="1">
    <location>
        <begin position="1"/>
        <end position="19"/>
    </location>
</feature>
<feature type="chain" id="PRO_0000318967" description="Alpha-2-macroglobulin-like protein 1">
    <location>
        <begin position="20"/>
        <end position="1456"/>
    </location>
</feature>
<feature type="glycosylation site" description="N-linked (GlcNAc...) asparagine" evidence="1">
    <location>
        <position position="48"/>
    </location>
</feature>
<feature type="glycosylation site" description="N-linked (GlcNAc...) asparagine" evidence="1">
    <location>
        <position position="172"/>
    </location>
</feature>
<feature type="glycosylation site" description="N-linked (GlcNAc...) asparagine" evidence="1">
    <location>
        <position position="868"/>
    </location>
</feature>
<feature type="sequence conflict" description="In Ref. 1; BAE23794." evidence="4" ref="1">
    <original>E</original>
    <variation>G</variation>
    <location>
        <position position="1127"/>
    </location>
</feature>
<feature type="sequence conflict" description="In Ref. 1; BAE23794." evidence="4" ref="1">
    <original>S</original>
    <variation>C</variation>
    <location>
        <position position="1292"/>
    </location>
</feature>
<organism>
    <name type="scientific">Mus musculus</name>
    <name type="common">Mouse</name>
    <dbReference type="NCBI Taxonomy" id="10090"/>
    <lineage>
        <taxon>Eukaryota</taxon>
        <taxon>Metazoa</taxon>
        <taxon>Chordata</taxon>
        <taxon>Craniata</taxon>
        <taxon>Vertebrata</taxon>
        <taxon>Euteleostomi</taxon>
        <taxon>Mammalia</taxon>
        <taxon>Eutheria</taxon>
        <taxon>Euarchontoglires</taxon>
        <taxon>Glires</taxon>
        <taxon>Rodentia</taxon>
        <taxon>Myomorpha</taxon>
        <taxon>Muroidea</taxon>
        <taxon>Muridae</taxon>
        <taxon>Murinae</taxon>
        <taxon>Mus</taxon>
        <taxon>Mus</taxon>
    </lineage>
</organism>
<evidence type="ECO:0000255" key="1"/>
<evidence type="ECO:0000269" key="2">
    <source>
    </source>
</evidence>
<evidence type="ECO:0000303" key="3">
    <source>
    </source>
</evidence>
<evidence type="ECO:0000305" key="4"/>
<evidence type="ECO:0000312" key="5">
    <source>
        <dbReference type="MGI" id="MGI:3039594"/>
    </source>
</evidence>
<proteinExistence type="evidence at protein level"/>
<reference key="1">
    <citation type="journal article" date="2005" name="Science">
        <title>The transcriptional landscape of the mammalian genome.</title>
        <authorList>
            <person name="Carninci P."/>
            <person name="Kasukawa T."/>
            <person name="Katayama S."/>
            <person name="Gough J."/>
            <person name="Frith M.C."/>
            <person name="Maeda N."/>
            <person name="Oyama R."/>
            <person name="Ravasi T."/>
            <person name="Lenhard B."/>
            <person name="Wells C."/>
            <person name="Kodzius R."/>
            <person name="Shimokawa K."/>
            <person name="Bajic V.B."/>
            <person name="Brenner S.E."/>
            <person name="Batalov S."/>
            <person name="Forrest A.R."/>
            <person name="Zavolan M."/>
            <person name="Davis M.J."/>
            <person name="Wilming L.G."/>
            <person name="Aidinis V."/>
            <person name="Allen J.E."/>
            <person name="Ambesi-Impiombato A."/>
            <person name="Apweiler R."/>
            <person name="Aturaliya R.N."/>
            <person name="Bailey T.L."/>
            <person name="Bansal M."/>
            <person name="Baxter L."/>
            <person name="Beisel K.W."/>
            <person name="Bersano T."/>
            <person name="Bono H."/>
            <person name="Chalk A.M."/>
            <person name="Chiu K.P."/>
            <person name="Choudhary V."/>
            <person name="Christoffels A."/>
            <person name="Clutterbuck D.R."/>
            <person name="Crowe M.L."/>
            <person name="Dalla E."/>
            <person name="Dalrymple B.P."/>
            <person name="de Bono B."/>
            <person name="Della Gatta G."/>
            <person name="di Bernardo D."/>
            <person name="Down T."/>
            <person name="Engstrom P."/>
            <person name="Fagiolini M."/>
            <person name="Faulkner G."/>
            <person name="Fletcher C.F."/>
            <person name="Fukushima T."/>
            <person name="Furuno M."/>
            <person name="Futaki S."/>
            <person name="Gariboldi M."/>
            <person name="Georgii-Hemming P."/>
            <person name="Gingeras T.R."/>
            <person name="Gojobori T."/>
            <person name="Green R.E."/>
            <person name="Gustincich S."/>
            <person name="Harbers M."/>
            <person name="Hayashi Y."/>
            <person name="Hensch T.K."/>
            <person name="Hirokawa N."/>
            <person name="Hill D."/>
            <person name="Huminiecki L."/>
            <person name="Iacono M."/>
            <person name="Ikeo K."/>
            <person name="Iwama A."/>
            <person name="Ishikawa T."/>
            <person name="Jakt M."/>
            <person name="Kanapin A."/>
            <person name="Katoh M."/>
            <person name="Kawasawa Y."/>
            <person name="Kelso J."/>
            <person name="Kitamura H."/>
            <person name="Kitano H."/>
            <person name="Kollias G."/>
            <person name="Krishnan S.P."/>
            <person name="Kruger A."/>
            <person name="Kummerfeld S.K."/>
            <person name="Kurochkin I.V."/>
            <person name="Lareau L.F."/>
            <person name="Lazarevic D."/>
            <person name="Lipovich L."/>
            <person name="Liu J."/>
            <person name="Liuni S."/>
            <person name="McWilliam S."/>
            <person name="Madan Babu M."/>
            <person name="Madera M."/>
            <person name="Marchionni L."/>
            <person name="Matsuda H."/>
            <person name="Matsuzawa S."/>
            <person name="Miki H."/>
            <person name="Mignone F."/>
            <person name="Miyake S."/>
            <person name="Morris K."/>
            <person name="Mottagui-Tabar S."/>
            <person name="Mulder N."/>
            <person name="Nakano N."/>
            <person name="Nakauchi H."/>
            <person name="Ng P."/>
            <person name="Nilsson R."/>
            <person name="Nishiguchi S."/>
            <person name="Nishikawa S."/>
            <person name="Nori F."/>
            <person name="Ohara O."/>
            <person name="Okazaki Y."/>
            <person name="Orlando V."/>
            <person name="Pang K.C."/>
            <person name="Pavan W.J."/>
            <person name="Pavesi G."/>
            <person name="Pesole G."/>
            <person name="Petrovsky N."/>
            <person name="Piazza S."/>
            <person name="Reed J."/>
            <person name="Reid J.F."/>
            <person name="Ring B.Z."/>
            <person name="Ringwald M."/>
            <person name="Rost B."/>
            <person name="Ruan Y."/>
            <person name="Salzberg S.L."/>
            <person name="Sandelin A."/>
            <person name="Schneider C."/>
            <person name="Schoenbach C."/>
            <person name="Sekiguchi K."/>
            <person name="Semple C.A."/>
            <person name="Seno S."/>
            <person name="Sessa L."/>
            <person name="Sheng Y."/>
            <person name="Shibata Y."/>
            <person name="Shimada H."/>
            <person name="Shimada K."/>
            <person name="Silva D."/>
            <person name="Sinclair B."/>
            <person name="Sperling S."/>
            <person name="Stupka E."/>
            <person name="Sugiura K."/>
            <person name="Sultana R."/>
            <person name="Takenaka Y."/>
            <person name="Taki K."/>
            <person name="Tammoja K."/>
            <person name="Tan S.L."/>
            <person name="Tang S."/>
            <person name="Taylor M.S."/>
            <person name="Tegner J."/>
            <person name="Teichmann S.A."/>
            <person name="Ueda H.R."/>
            <person name="van Nimwegen E."/>
            <person name="Verardo R."/>
            <person name="Wei C.L."/>
            <person name="Yagi K."/>
            <person name="Yamanishi H."/>
            <person name="Zabarovsky E."/>
            <person name="Zhu S."/>
            <person name="Zimmer A."/>
            <person name="Hide W."/>
            <person name="Bult C."/>
            <person name="Grimmond S.M."/>
            <person name="Teasdale R.D."/>
            <person name="Liu E.T."/>
            <person name="Brusic V."/>
            <person name="Quackenbush J."/>
            <person name="Wahlestedt C."/>
            <person name="Mattick J.S."/>
            <person name="Hume D.A."/>
            <person name="Kai C."/>
            <person name="Sasaki D."/>
            <person name="Tomaru Y."/>
            <person name="Fukuda S."/>
            <person name="Kanamori-Katayama M."/>
            <person name="Suzuki M."/>
            <person name="Aoki J."/>
            <person name="Arakawa T."/>
            <person name="Iida J."/>
            <person name="Imamura K."/>
            <person name="Itoh M."/>
            <person name="Kato T."/>
            <person name="Kawaji H."/>
            <person name="Kawagashira N."/>
            <person name="Kawashima T."/>
            <person name="Kojima M."/>
            <person name="Kondo S."/>
            <person name="Konno H."/>
            <person name="Nakano K."/>
            <person name="Ninomiya N."/>
            <person name="Nishio T."/>
            <person name="Okada M."/>
            <person name="Plessy C."/>
            <person name="Shibata K."/>
            <person name="Shiraki T."/>
            <person name="Suzuki S."/>
            <person name="Tagami M."/>
            <person name="Waki K."/>
            <person name="Watahiki A."/>
            <person name="Okamura-Oho Y."/>
            <person name="Suzuki H."/>
            <person name="Kawai J."/>
            <person name="Hayashizaki Y."/>
        </authorList>
    </citation>
    <scope>NUCLEOTIDE SEQUENCE [LARGE SCALE MRNA]</scope>
    <source>
        <strain>C57BL/6J</strain>
        <tissue>Thymus</tissue>
    </source>
</reference>
<reference key="2">
    <citation type="journal article" date="2009" name="PLoS Biol.">
        <title>Lineage-specific biology revealed by a finished genome assembly of the mouse.</title>
        <authorList>
            <person name="Church D.M."/>
            <person name="Goodstadt L."/>
            <person name="Hillier L.W."/>
            <person name="Zody M.C."/>
            <person name="Goldstein S."/>
            <person name="She X."/>
            <person name="Bult C.J."/>
            <person name="Agarwala R."/>
            <person name="Cherry J.L."/>
            <person name="DiCuccio M."/>
            <person name="Hlavina W."/>
            <person name="Kapustin Y."/>
            <person name="Meric P."/>
            <person name="Maglott D."/>
            <person name="Birtle Z."/>
            <person name="Marques A.C."/>
            <person name="Graves T."/>
            <person name="Zhou S."/>
            <person name="Teague B."/>
            <person name="Potamousis K."/>
            <person name="Churas C."/>
            <person name="Place M."/>
            <person name="Herschleb J."/>
            <person name="Runnheim R."/>
            <person name="Forrest D."/>
            <person name="Amos-Landgraf J."/>
            <person name="Schwartz D.C."/>
            <person name="Cheng Z."/>
            <person name="Lindblad-Toh K."/>
            <person name="Eichler E.E."/>
            <person name="Ponting C.P."/>
        </authorList>
    </citation>
    <scope>NUCLEOTIDE SEQUENCE [LARGE SCALE GENOMIC DNA]</scope>
    <source>
        <strain>C57BL/6J</strain>
    </source>
</reference>
<reference key="3">
    <citation type="journal article" date="2019" name="Sci. Rep.">
        <title>A complex of novel protease inhibitor, ovostatin homolog, with its cognate proteases in immature mice uterine luminal fluid.</title>
        <authorList>
            <person name="Huang H.L."/>
            <person name="Li S.C."/>
            <person name="Wu J.F."/>
        </authorList>
    </citation>
    <scope>IDENTIFICATION BY MASS SPECTROMETRY</scope>
    <scope>FUNCTION</scope>
    <scope>SUBUNIT</scope>
    <scope>INTERACTION IN A COMPLEX WITH C3; CLCA1 AND ALB</scope>
    <scope>SUBCELLULAR LOCATION</scope>
</reference>
<gene>
    <name evidence="5" type="primary">A2ml1</name>
    <name evidence="3" type="synonym">mOH</name>
    <name evidence="5" type="synonym">Ovos</name>
</gene>
<dbReference type="EMBL" id="AK138836">
    <property type="protein sequence ID" value="BAE23794.1"/>
    <property type="molecule type" value="mRNA"/>
</dbReference>
<dbReference type="EMBL" id="AC123060">
    <property type="status" value="NOT_ANNOTATED_CDS"/>
    <property type="molecule type" value="Genomic_DNA"/>
</dbReference>
<dbReference type="CCDS" id="CCDS39651.1"/>
<dbReference type="RefSeq" id="NP_001001179.2">
    <property type="nucleotide sequence ID" value="NM_001001179.3"/>
</dbReference>
<dbReference type="SMR" id="Q3UU35"/>
<dbReference type="STRING" id="10090.ENSMUSP00000059426"/>
<dbReference type="GlyCosmos" id="Q3UU35">
    <property type="glycosylation" value="3 sites, No reported glycans"/>
</dbReference>
<dbReference type="GlyGen" id="Q3UU35">
    <property type="glycosylation" value="8 sites, 3 N-linked glycans (6 sites)"/>
</dbReference>
<dbReference type="iPTMnet" id="Q3UU35"/>
<dbReference type="PhosphoSitePlus" id="Q3UU35"/>
<dbReference type="PaxDb" id="10090-ENSMUSP00000059426"/>
<dbReference type="ProteomicsDB" id="294413"/>
<dbReference type="DNASU" id="232400"/>
<dbReference type="Ensembl" id="ENSMUST00000060574.9">
    <property type="protein sequence ID" value="ENSMUSP00000059426.8"/>
    <property type="gene ID" value="ENSMUSG00000047228.10"/>
</dbReference>
<dbReference type="GeneID" id="232400"/>
<dbReference type="KEGG" id="mmu:232400"/>
<dbReference type="UCSC" id="uc009eeh.2">
    <property type="organism name" value="mouse"/>
</dbReference>
<dbReference type="AGR" id="MGI:3039594"/>
<dbReference type="CTD" id="144568"/>
<dbReference type="MGI" id="MGI:3039594">
    <property type="gene designation" value="A2ml1"/>
</dbReference>
<dbReference type="VEuPathDB" id="HostDB:ENSMUSG00000047228"/>
<dbReference type="eggNOG" id="KOG1366">
    <property type="taxonomic scope" value="Eukaryota"/>
</dbReference>
<dbReference type="GeneTree" id="ENSGT00940000158779"/>
<dbReference type="HOGENOM" id="CLU_001634_0_1_1"/>
<dbReference type="InParanoid" id="Q3UU35"/>
<dbReference type="OMA" id="ENMDPFY"/>
<dbReference type="OrthoDB" id="9998011at2759"/>
<dbReference type="PhylomeDB" id="Q3UU35"/>
<dbReference type="TreeFam" id="TF313285"/>
<dbReference type="BioGRID-ORCS" id="232400">
    <property type="hits" value="0 hits in 76 CRISPR screens"/>
</dbReference>
<dbReference type="PRO" id="PR:Q3UU35"/>
<dbReference type="Proteomes" id="UP000000589">
    <property type="component" value="Chromosome 6"/>
</dbReference>
<dbReference type="RNAct" id="Q3UU35">
    <property type="molecule type" value="protein"/>
</dbReference>
<dbReference type="Bgee" id="ENSMUSG00000047228">
    <property type="expression patterns" value="Expressed in submandibular gland and 74 other cell types or tissues"/>
</dbReference>
<dbReference type="GO" id="GO:0005615">
    <property type="term" value="C:extracellular space"/>
    <property type="evidence" value="ECO:0007669"/>
    <property type="project" value="InterPro"/>
</dbReference>
<dbReference type="GO" id="GO:0032991">
    <property type="term" value="C:protein-containing complex"/>
    <property type="evidence" value="ECO:0000314"/>
    <property type="project" value="MGI"/>
</dbReference>
<dbReference type="GO" id="GO:0004867">
    <property type="term" value="F:serine-type endopeptidase inhibitor activity"/>
    <property type="evidence" value="ECO:0007669"/>
    <property type="project" value="UniProtKB-KW"/>
</dbReference>
<dbReference type="CDD" id="cd02897">
    <property type="entry name" value="A2M_2"/>
    <property type="match status" value="1"/>
</dbReference>
<dbReference type="FunFam" id="2.60.40.1930:FF:000001">
    <property type="entry name" value="CD109 isoform 3"/>
    <property type="match status" value="1"/>
</dbReference>
<dbReference type="Gene3D" id="1.50.10.20">
    <property type="match status" value="1"/>
</dbReference>
<dbReference type="Gene3D" id="2.20.130.20">
    <property type="match status" value="2"/>
</dbReference>
<dbReference type="Gene3D" id="2.60.120.1540">
    <property type="match status" value="1"/>
</dbReference>
<dbReference type="Gene3D" id="2.60.40.1930">
    <property type="match status" value="2"/>
</dbReference>
<dbReference type="Gene3D" id="2.60.40.1940">
    <property type="match status" value="1"/>
</dbReference>
<dbReference type="Gene3D" id="2.60.40.690">
    <property type="entry name" value="Alpha-macroglobulin, receptor-binding domain"/>
    <property type="match status" value="1"/>
</dbReference>
<dbReference type="Gene3D" id="2.60.40.10">
    <property type="entry name" value="Immunoglobulins"/>
    <property type="match status" value="2"/>
</dbReference>
<dbReference type="InterPro" id="IPR009048">
    <property type="entry name" value="A-macroglobulin_rcpt-bd"/>
</dbReference>
<dbReference type="InterPro" id="IPR036595">
    <property type="entry name" value="A-macroglobulin_rcpt-bd_sf"/>
</dbReference>
<dbReference type="InterPro" id="IPR050473">
    <property type="entry name" value="A2M/Complement_sys"/>
</dbReference>
<dbReference type="InterPro" id="IPR011625">
    <property type="entry name" value="A2M_N_BRD"/>
</dbReference>
<dbReference type="InterPro" id="IPR041813">
    <property type="entry name" value="A2M_TED"/>
</dbReference>
<dbReference type="InterPro" id="IPR047565">
    <property type="entry name" value="Alpha-macroglob_thiol-ester_cl"/>
</dbReference>
<dbReference type="InterPro" id="IPR011626">
    <property type="entry name" value="Alpha-macroglobulin_TED"/>
</dbReference>
<dbReference type="InterPro" id="IPR013783">
    <property type="entry name" value="Ig-like_fold"/>
</dbReference>
<dbReference type="InterPro" id="IPR014756">
    <property type="entry name" value="Ig_E-set"/>
</dbReference>
<dbReference type="InterPro" id="IPR001599">
    <property type="entry name" value="Macroglobln_a2"/>
</dbReference>
<dbReference type="InterPro" id="IPR019742">
    <property type="entry name" value="MacrogloblnA2_CS"/>
</dbReference>
<dbReference type="InterPro" id="IPR002890">
    <property type="entry name" value="MG2"/>
</dbReference>
<dbReference type="InterPro" id="IPR041555">
    <property type="entry name" value="MG3"/>
</dbReference>
<dbReference type="InterPro" id="IPR040839">
    <property type="entry name" value="MG4"/>
</dbReference>
<dbReference type="InterPro" id="IPR008930">
    <property type="entry name" value="Terpenoid_cyclase/PrenylTrfase"/>
</dbReference>
<dbReference type="PANTHER" id="PTHR11412">
    <property type="entry name" value="MACROGLOBULIN / COMPLEMENT"/>
    <property type="match status" value="1"/>
</dbReference>
<dbReference type="PANTHER" id="PTHR11412:SF174">
    <property type="entry name" value="OVOSTATIN HOMOLOG 1"/>
    <property type="match status" value="1"/>
</dbReference>
<dbReference type="Pfam" id="PF00207">
    <property type="entry name" value="A2M"/>
    <property type="match status" value="1"/>
</dbReference>
<dbReference type="Pfam" id="PF07703">
    <property type="entry name" value="A2M_BRD"/>
    <property type="match status" value="1"/>
</dbReference>
<dbReference type="Pfam" id="PF07677">
    <property type="entry name" value="A2M_recep"/>
    <property type="match status" value="1"/>
</dbReference>
<dbReference type="Pfam" id="PF01835">
    <property type="entry name" value="MG2"/>
    <property type="match status" value="1"/>
</dbReference>
<dbReference type="Pfam" id="PF17791">
    <property type="entry name" value="MG3"/>
    <property type="match status" value="1"/>
</dbReference>
<dbReference type="Pfam" id="PF17789">
    <property type="entry name" value="MG4"/>
    <property type="match status" value="1"/>
</dbReference>
<dbReference type="Pfam" id="PF07678">
    <property type="entry name" value="TED_complement"/>
    <property type="match status" value="1"/>
</dbReference>
<dbReference type="SMART" id="SM01360">
    <property type="entry name" value="A2M"/>
    <property type="match status" value="1"/>
</dbReference>
<dbReference type="SMART" id="SM01359">
    <property type="entry name" value="A2M_N_2"/>
    <property type="match status" value="1"/>
</dbReference>
<dbReference type="SMART" id="SM01361">
    <property type="entry name" value="A2M_recep"/>
    <property type="match status" value="1"/>
</dbReference>
<dbReference type="SMART" id="SM01419">
    <property type="entry name" value="Thiol-ester_cl"/>
    <property type="match status" value="1"/>
</dbReference>
<dbReference type="SUPFAM" id="SSF49410">
    <property type="entry name" value="Alpha-macroglobulin receptor domain"/>
    <property type="match status" value="1"/>
</dbReference>
<dbReference type="SUPFAM" id="SSF81296">
    <property type="entry name" value="E set domains"/>
    <property type="match status" value="1"/>
</dbReference>
<dbReference type="SUPFAM" id="SSF48239">
    <property type="entry name" value="Terpenoid cyclases/Protein prenyltransferases"/>
    <property type="match status" value="1"/>
</dbReference>
<dbReference type="PROSITE" id="PS00477">
    <property type="entry name" value="ALPHA_2_MACROGLOBULIN"/>
    <property type="match status" value="1"/>
</dbReference>
<protein>
    <recommendedName>
        <fullName evidence="5">Alpha-2-macroglobulin-like protein 1</fullName>
    </recommendedName>
    <alternativeName>
        <fullName evidence="3">Ovostatin homolog</fullName>
    </alternativeName>
</protein>
<name>OVOS_MOUSE</name>
<sequence>MVPTILLSALLLHFTDVVAAEPRYILWVSSVVQRFSSEKACLHLLNLNESVSLSVTLEYDGSSTTIFDQPVDEGNFYACADFKVSQMSSEQLAFVALLVQGNTLKISERRSVAIAAEENATFVQTDTPVHKPGDTVHFRVVTLNIWLKPVDDLYPLITVQDPQSNVIFQWINVTTFRNITQLSFQLTPEPILGDYTIVIKTQSGTTVMDHFTVNRDVLPKFEVELTAPETITIADSQFQMVTCAKYTYGQPVQGKAQIKVCRELFSPAHCESNENEICEQFTVQLKDGCASHIINTKVFQLDRSGLFMTLNVNEVVTESGTGVQMSKTHSVFITSVLGTVSFENMDPFYRRGITYFGTLKFSGPNNTPLVDKLLQLELDGKPVGNYTTDENGEARFSINTSEIFGAQISLKAVYVRPRSCHRSSWLSPEYLDAYFSASRFYSQTSSFTKIILEPKQLPCDQEKMFSVLYSLNPEAYKEASDVTFFYLVMVRGGISRSGQKQVRVQAWNGNFSFPISINADLAPSADLFVYTLHPSGEIVADNVRLQIEKCFKNKVSINFSRDKDLPGSNTSVHLQAAPDSFCALRAVDKSALLLNHGQEMTPESVYFTLPYIHQYGYFYNGLNLDDQQAEPCIPQKDLFYNGLYYTPTGNIWDGDLSNLLSNMGLKIFTNLHYRKPEVCSSQENQPLLRTFDHPNERIMMYGGGAPPSSAFHDSVDSISHAKVAIKETVRTNFPRTWIWNLVSVDSSGTANVSFLVPDTITQWEASAFCVNGNAGFGISPKVSLQISQPFFVEVTSPFSVVRSEQSDMVVTVFNYLTTCVEISVQLEASENYEASINTQRNTDSEVLQAGEQKTYVWTIIPKTLGKVNVTVVATSKQSRACPNDASKEQDVHWKDTVVKTMLVEAEGIEKEATQSFLICPKGTKASKQTLLELPSNVVEGSVRSFVTIVGDILGVAMQNLESLLQMPYGCGEQNIAQLASDVYILDYLKATDQLTEELKSKAQRLLSNGYQNHLSFKNYDGSYDVFCQSNQEGSTWLSALSFKTVEKMKEYIFIEETVPKQTLIWLVKKQKSNGCFRRDEKHVDTAQEGREGDQEDIALTAYVVGVFLEVGLNASFPALRNGLYCLEEAFSNGVTNGYTQAILAYVFALAGKEQQAKSLLSILDKSATKTNNMIYWERDEKPETDNSPSFIPSALSGETEKTCYVLLAVLSQDTQDLDYASKIVQWLAQRMNSHGGFSAMQDTTVCLLALTQYMKLTGSNPQNTITLSSEESEEVFYVNRNKRLLVQHSKVSKGHQQYTVDVEGDGCSFIQATLRYNVPLPKEASGFSLSVKTGKSNSSDEFQTKFELTVTLTYTGARESSVTVLVDVKMLSGFTPVVSSTEELKFNSQVTKTDIKNGHVLFYLENVPKEATSLTFSIEQTNHVANIQPAPVTVYSYEKGEYAFDSYNINSISDSQ</sequence>